<feature type="chain" id="PRO_0000156612" description="Homoserine kinase">
    <location>
        <begin position="1"/>
        <end position="305"/>
    </location>
</feature>
<feature type="binding site" evidence="1">
    <location>
        <begin position="90"/>
        <end position="100"/>
    </location>
    <ligand>
        <name>ATP</name>
        <dbReference type="ChEBI" id="CHEBI:30616"/>
    </ligand>
</feature>
<protein>
    <recommendedName>
        <fullName evidence="1">Homoserine kinase</fullName>
        <shortName evidence="1">HK</shortName>
        <shortName evidence="1">HSK</shortName>
        <ecNumber evidence="1">2.7.1.39</ecNumber>
    </recommendedName>
</protein>
<gene>
    <name evidence="1" type="primary">thrB</name>
    <name type="ordered locus">SH1577</name>
</gene>
<accession>Q4L639</accession>
<keyword id="KW-0028">Amino-acid biosynthesis</keyword>
<keyword id="KW-0067">ATP-binding</keyword>
<keyword id="KW-0963">Cytoplasm</keyword>
<keyword id="KW-0418">Kinase</keyword>
<keyword id="KW-0547">Nucleotide-binding</keyword>
<keyword id="KW-0791">Threonine biosynthesis</keyword>
<keyword id="KW-0808">Transferase</keyword>
<organism>
    <name type="scientific">Staphylococcus haemolyticus (strain JCSC1435)</name>
    <dbReference type="NCBI Taxonomy" id="279808"/>
    <lineage>
        <taxon>Bacteria</taxon>
        <taxon>Bacillati</taxon>
        <taxon>Bacillota</taxon>
        <taxon>Bacilli</taxon>
        <taxon>Bacillales</taxon>
        <taxon>Staphylococcaceae</taxon>
        <taxon>Staphylococcus</taxon>
    </lineage>
</organism>
<reference key="1">
    <citation type="journal article" date="2005" name="J. Bacteriol.">
        <title>Whole-genome sequencing of Staphylococcus haemolyticus uncovers the extreme plasticity of its genome and the evolution of human-colonizing staphylococcal species.</title>
        <authorList>
            <person name="Takeuchi F."/>
            <person name="Watanabe S."/>
            <person name="Baba T."/>
            <person name="Yuzawa H."/>
            <person name="Ito T."/>
            <person name="Morimoto Y."/>
            <person name="Kuroda M."/>
            <person name="Cui L."/>
            <person name="Takahashi M."/>
            <person name="Ankai A."/>
            <person name="Baba S."/>
            <person name="Fukui S."/>
            <person name="Lee J.C."/>
            <person name="Hiramatsu K."/>
        </authorList>
    </citation>
    <scope>NUCLEOTIDE SEQUENCE [LARGE SCALE GENOMIC DNA]</scope>
    <source>
        <strain>JCSC1435</strain>
    </source>
</reference>
<dbReference type="EC" id="2.7.1.39" evidence="1"/>
<dbReference type="EMBL" id="AP006716">
    <property type="protein sequence ID" value="BAE04886.1"/>
    <property type="molecule type" value="Genomic_DNA"/>
</dbReference>
<dbReference type="RefSeq" id="WP_011275867.1">
    <property type="nucleotide sequence ID" value="NC_007168.1"/>
</dbReference>
<dbReference type="SMR" id="Q4L639"/>
<dbReference type="KEGG" id="sha:SH1577"/>
<dbReference type="eggNOG" id="COG0083">
    <property type="taxonomic scope" value="Bacteria"/>
</dbReference>
<dbReference type="HOGENOM" id="CLU_041243_0_0_9"/>
<dbReference type="OrthoDB" id="9769912at2"/>
<dbReference type="UniPathway" id="UPA00050">
    <property type="reaction ID" value="UER00064"/>
</dbReference>
<dbReference type="Proteomes" id="UP000000543">
    <property type="component" value="Chromosome"/>
</dbReference>
<dbReference type="GO" id="GO:0005737">
    <property type="term" value="C:cytoplasm"/>
    <property type="evidence" value="ECO:0007669"/>
    <property type="project" value="UniProtKB-SubCell"/>
</dbReference>
<dbReference type="GO" id="GO:0005524">
    <property type="term" value="F:ATP binding"/>
    <property type="evidence" value="ECO:0007669"/>
    <property type="project" value="UniProtKB-UniRule"/>
</dbReference>
<dbReference type="GO" id="GO:0004413">
    <property type="term" value="F:homoserine kinase activity"/>
    <property type="evidence" value="ECO:0007669"/>
    <property type="project" value="UniProtKB-UniRule"/>
</dbReference>
<dbReference type="GO" id="GO:0009088">
    <property type="term" value="P:threonine biosynthetic process"/>
    <property type="evidence" value="ECO:0007669"/>
    <property type="project" value="UniProtKB-UniRule"/>
</dbReference>
<dbReference type="Gene3D" id="3.30.230.10">
    <property type="match status" value="1"/>
</dbReference>
<dbReference type="Gene3D" id="3.30.70.890">
    <property type="entry name" value="GHMP kinase, C-terminal domain"/>
    <property type="match status" value="1"/>
</dbReference>
<dbReference type="HAMAP" id="MF_00384">
    <property type="entry name" value="Homoser_kinase"/>
    <property type="match status" value="1"/>
</dbReference>
<dbReference type="InterPro" id="IPR013750">
    <property type="entry name" value="GHMP_kinase_C_dom"/>
</dbReference>
<dbReference type="InterPro" id="IPR036554">
    <property type="entry name" value="GHMP_kinase_C_sf"/>
</dbReference>
<dbReference type="InterPro" id="IPR006204">
    <property type="entry name" value="GHMP_kinase_N_dom"/>
</dbReference>
<dbReference type="InterPro" id="IPR006203">
    <property type="entry name" value="GHMP_knse_ATP-bd_CS"/>
</dbReference>
<dbReference type="InterPro" id="IPR000870">
    <property type="entry name" value="Homoserine_kinase"/>
</dbReference>
<dbReference type="InterPro" id="IPR020568">
    <property type="entry name" value="Ribosomal_Su5_D2-typ_SF"/>
</dbReference>
<dbReference type="InterPro" id="IPR014721">
    <property type="entry name" value="Ribsml_uS5_D2-typ_fold_subgr"/>
</dbReference>
<dbReference type="NCBIfam" id="TIGR00191">
    <property type="entry name" value="thrB"/>
    <property type="match status" value="1"/>
</dbReference>
<dbReference type="PANTHER" id="PTHR20861:SF1">
    <property type="entry name" value="HOMOSERINE KINASE"/>
    <property type="match status" value="1"/>
</dbReference>
<dbReference type="PANTHER" id="PTHR20861">
    <property type="entry name" value="HOMOSERINE/4-DIPHOSPHOCYTIDYL-2-C-METHYL-D-ERYTHRITOL KINASE"/>
    <property type="match status" value="1"/>
</dbReference>
<dbReference type="Pfam" id="PF08544">
    <property type="entry name" value="GHMP_kinases_C"/>
    <property type="match status" value="1"/>
</dbReference>
<dbReference type="Pfam" id="PF00288">
    <property type="entry name" value="GHMP_kinases_N"/>
    <property type="match status" value="1"/>
</dbReference>
<dbReference type="PIRSF" id="PIRSF000676">
    <property type="entry name" value="Homoser_kin"/>
    <property type="match status" value="1"/>
</dbReference>
<dbReference type="PRINTS" id="PR00958">
    <property type="entry name" value="HOMSERKINASE"/>
</dbReference>
<dbReference type="SUPFAM" id="SSF55060">
    <property type="entry name" value="GHMP Kinase, C-terminal domain"/>
    <property type="match status" value="1"/>
</dbReference>
<dbReference type="SUPFAM" id="SSF54211">
    <property type="entry name" value="Ribosomal protein S5 domain 2-like"/>
    <property type="match status" value="1"/>
</dbReference>
<dbReference type="PROSITE" id="PS00627">
    <property type="entry name" value="GHMP_KINASES_ATP"/>
    <property type="match status" value="1"/>
</dbReference>
<sequence>MTEQLHLKIPASTANLGVGFDSIGMAIDKYLHLYVKRIEEEEWEFTYLNSELDSLPKNKDNYVFKVAQQVASKYNVKLPSLSVEMRSDIPLARGLGSSASALVGALYIANYFGNIQLSKYELLQLATEIEGHPDNVAPTIYGGLLAGFYNPDTKETNVAHIDVPDVDIILTIPPYELKTEDSRNVLPDQFSHKRAVQSSAISNTMLCALIQHNYGLAGKMMSQDGFHEPYRQHLISEFKEVKAIAQQYDAYATVISGAGPTILTMSPKEKSGQLVRALRKAVTTCHSELATINEIGVVEEIVYPS</sequence>
<evidence type="ECO:0000255" key="1">
    <source>
        <dbReference type="HAMAP-Rule" id="MF_00384"/>
    </source>
</evidence>
<comment type="function">
    <text evidence="1">Catalyzes the ATP-dependent phosphorylation of L-homoserine to L-homoserine phosphate.</text>
</comment>
<comment type="catalytic activity">
    <reaction evidence="1">
        <text>L-homoserine + ATP = O-phospho-L-homoserine + ADP + H(+)</text>
        <dbReference type="Rhea" id="RHEA:13985"/>
        <dbReference type="ChEBI" id="CHEBI:15378"/>
        <dbReference type="ChEBI" id="CHEBI:30616"/>
        <dbReference type="ChEBI" id="CHEBI:57476"/>
        <dbReference type="ChEBI" id="CHEBI:57590"/>
        <dbReference type="ChEBI" id="CHEBI:456216"/>
        <dbReference type="EC" id="2.7.1.39"/>
    </reaction>
</comment>
<comment type="pathway">
    <text evidence="1">Amino-acid biosynthesis; L-threonine biosynthesis; L-threonine from L-aspartate: step 4/5.</text>
</comment>
<comment type="subcellular location">
    <subcellularLocation>
        <location evidence="1">Cytoplasm</location>
    </subcellularLocation>
</comment>
<comment type="similarity">
    <text evidence="1">Belongs to the GHMP kinase family. Homoserine kinase subfamily.</text>
</comment>
<proteinExistence type="inferred from homology"/>
<name>KHSE_STAHJ</name>